<dbReference type="EMBL" id="AM946015">
    <property type="protein sequence ID" value="CAR43151.1"/>
    <property type="molecule type" value="Genomic_DNA"/>
</dbReference>
<dbReference type="RefSeq" id="WP_015911777.1">
    <property type="nucleotide sequence ID" value="NC_012004.1"/>
</dbReference>
<dbReference type="SMR" id="B9DVB6"/>
<dbReference type="STRING" id="218495.SUB1465"/>
<dbReference type="GeneID" id="93826784"/>
<dbReference type="KEGG" id="sub:SUB1465"/>
<dbReference type="eggNOG" id="COG0858">
    <property type="taxonomic scope" value="Bacteria"/>
</dbReference>
<dbReference type="HOGENOM" id="CLU_089475_3_0_9"/>
<dbReference type="OrthoDB" id="307788at2"/>
<dbReference type="Proteomes" id="UP000000449">
    <property type="component" value="Chromosome"/>
</dbReference>
<dbReference type="GO" id="GO:0005829">
    <property type="term" value="C:cytosol"/>
    <property type="evidence" value="ECO:0007669"/>
    <property type="project" value="TreeGrafter"/>
</dbReference>
<dbReference type="GO" id="GO:0043024">
    <property type="term" value="F:ribosomal small subunit binding"/>
    <property type="evidence" value="ECO:0007669"/>
    <property type="project" value="TreeGrafter"/>
</dbReference>
<dbReference type="GO" id="GO:0030490">
    <property type="term" value="P:maturation of SSU-rRNA"/>
    <property type="evidence" value="ECO:0007669"/>
    <property type="project" value="UniProtKB-UniRule"/>
</dbReference>
<dbReference type="Gene3D" id="3.30.300.20">
    <property type="match status" value="1"/>
</dbReference>
<dbReference type="HAMAP" id="MF_00003">
    <property type="entry name" value="RbfA"/>
    <property type="match status" value="1"/>
</dbReference>
<dbReference type="InterPro" id="IPR015946">
    <property type="entry name" value="KH_dom-like_a/b"/>
</dbReference>
<dbReference type="InterPro" id="IPR000238">
    <property type="entry name" value="RbfA"/>
</dbReference>
<dbReference type="InterPro" id="IPR023799">
    <property type="entry name" value="RbfA_dom_sf"/>
</dbReference>
<dbReference type="InterPro" id="IPR020053">
    <property type="entry name" value="Ribosome-bd_factorA_CS"/>
</dbReference>
<dbReference type="NCBIfam" id="TIGR00082">
    <property type="entry name" value="rbfA"/>
    <property type="match status" value="1"/>
</dbReference>
<dbReference type="PANTHER" id="PTHR33515">
    <property type="entry name" value="RIBOSOME-BINDING FACTOR A, CHLOROPLASTIC-RELATED"/>
    <property type="match status" value="1"/>
</dbReference>
<dbReference type="PANTHER" id="PTHR33515:SF1">
    <property type="entry name" value="RIBOSOME-BINDING FACTOR A, CHLOROPLASTIC-RELATED"/>
    <property type="match status" value="1"/>
</dbReference>
<dbReference type="Pfam" id="PF02033">
    <property type="entry name" value="RBFA"/>
    <property type="match status" value="1"/>
</dbReference>
<dbReference type="SUPFAM" id="SSF89919">
    <property type="entry name" value="Ribosome-binding factor A, RbfA"/>
    <property type="match status" value="1"/>
</dbReference>
<dbReference type="PROSITE" id="PS01319">
    <property type="entry name" value="RBFA"/>
    <property type="match status" value="1"/>
</dbReference>
<protein>
    <recommendedName>
        <fullName evidence="1">Ribosome-binding factor A</fullName>
    </recommendedName>
</protein>
<comment type="function">
    <text evidence="1">One of several proteins that assist in the late maturation steps of the functional core of the 30S ribosomal subunit. Associates with free 30S ribosomal subunits (but not with 30S subunits that are part of 70S ribosomes or polysomes). Required for efficient processing of 16S rRNA. May interact with the 5'-terminal helix region of 16S rRNA.</text>
</comment>
<comment type="subunit">
    <text evidence="1">Monomer. Binds 30S ribosomal subunits, but not 50S ribosomal subunits or 70S ribosomes.</text>
</comment>
<comment type="subcellular location">
    <subcellularLocation>
        <location evidence="1">Cytoplasm</location>
    </subcellularLocation>
</comment>
<comment type="similarity">
    <text evidence="1">Belongs to the RbfA family.</text>
</comment>
<feature type="chain" id="PRO_1000116218" description="Ribosome-binding factor A">
    <location>
        <begin position="1"/>
        <end position="116"/>
    </location>
</feature>
<reference key="1">
    <citation type="journal article" date="2009" name="BMC Genomics">
        <title>Evidence for niche adaptation in the genome of the bovine pathogen Streptococcus uberis.</title>
        <authorList>
            <person name="Ward P.N."/>
            <person name="Holden M.T.G."/>
            <person name="Leigh J.A."/>
            <person name="Lennard N."/>
            <person name="Bignell A."/>
            <person name="Barron A."/>
            <person name="Clark L."/>
            <person name="Quail M.A."/>
            <person name="Woodward J."/>
            <person name="Barrell B.G."/>
            <person name="Egan S.A."/>
            <person name="Field T.R."/>
            <person name="Maskell D."/>
            <person name="Kehoe M."/>
            <person name="Dowson C.G."/>
            <person name="Chanter N."/>
            <person name="Whatmore A.M."/>
            <person name="Bentley S.D."/>
            <person name="Parkhill J."/>
        </authorList>
    </citation>
    <scope>NUCLEOTIDE SEQUENCE [LARGE SCALE GENOMIC DNA]</scope>
    <source>
        <strain>ATCC BAA-854 / 0140J</strain>
    </source>
</reference>
<name>RBFA_STRU0</name>
<proteinExistence type="inferred from homology"/>
<sequence>MANHRIDRVGMEIKREVNAILQKKVRDPRVEGVTITEVQMLGDLSAAKVYYTVMSDLASDNQKAQLGLEKATGTIKRELGKNLTMYKIPDLIFEKDNSIAYGNKIDQLLRALDKKS</sequence>
<accession>B9DVB6</accession>
<keyword id="KW-0963">Cytoplasm</keyword>
<keyword id="KW-1185">Reference proteome</keyword>
<keyword id="KW-0690">Ribosome biogenesis</keyword>
<organism>
    <name type="scientific">Streptococcus uberis (strain ATCC BAA-854 / 0140J)</name>
    <dbReference type="NCBI Taxonomy" id="218495"/>
    <lineage>
        <taxon>Bacteria</taxon>
        <taxon>Bacillati</taxon>
        <taxon>Bacillota</taxon>
        <taxon>Bacilli</taxon>
        <taxon>Lactobacillales</taxon>
        <taxon>Streptococcaceae</taxon>
        <taxon>Streptococcus</taxon>
    </lineage>
</organism>
<evidence type="ECO:0000255" key="1">
    <source>
        <dbReference type="HAMAP-Rule" id="MF_00003"/>
    </source>
</evidence>
<gene>
    <name evidence="1" type="primary">rbfA</name>
    <name type="ordered locus">SUB1465</name>
</gene>